<proteinExistence type="inferred from homology"/>
<feature type="chain" id="PRO_1000014087" description="Ion-translocating oxidoreductase complex subunit E">
    <location>
        <begin position="1"/>
        <end position="231"/>
    </location>
</feature>
<feature type="transmembrane region" description="Helical" evidence="1">
    <location>
        <begin position="18"/>
        <end position="38"/>
    </location>
</feature>
<feature type="transmembrane region" description="Helical" evidence="1">
    <location>
        <begin position="39"/>
        <end position="59"/>
    </location>
</feature>
<feature type="transmembrane region" description="Helical" evidence="1">
    <location>
        <begin position="63"/>
        <end position="83"/>
    </location>
</feature>
<feature type="transmembrane region" description="Helical" evidence="1">
    <location>
        <begin position="86"/>
        <end position="106"/>
    </location>
</feature>
<feature type="transmembrane region" description="Helical" evidence="1">
    <location>
        <begin position="125"/>
        <end position="145"/>
    </location>
</feature>
<feature type="transmembrane region" description="Helical" evidence="1">
    <location>
        <begin position="182"/>
        <end position="202"/>
    </location>
</feature>
<organism>
    <name type="scientific">Escherichia coli O1:K1 / APEC</name>
    <dbReference type="NCBI Taxonomy" id="405955"/>
    <lineage>
        <taxon>Bacteria</taxon>
        <taxon>Pseudomonadati</taxon>
        <taxon>Pseudomonadota</taxon>
        <taxon>Gammaproteobacteria</taxon>
        <taxon>Enterobacterales</taxon>
        <taxon>Enterobacteriaceae</taxon>
        <taxon>Escherichia</taxon>
    </lineage>
</organism>
<gene>
    <name evidence="1" type="primary">rsxE</name>
    <name type="synonym">rnfE</name>
    <name type="ordered locus">Ecok1_15230</name>
    <name type="ORF">APECO1_715</name>
</gene>
<evidence type="ECO:0000255" key="1">
    <source>
        <dbReference type="HAMAP-Rule" id="MF_00478"/>
    </source>
</evidence>
<dbReference type="EC" id="7.-.-.-" evidence="1"/>
<dbReference type="EMBL" id="CP000468">
    <property type="protein sequence ID" value="ABJ01017.1"/>
    <property type="molecule type" value="Genomic_DNA"/>
</dbReference>
<dbReference type="RefSeq" id="WP_001289658.1">
    <property type="nucleotide sequence ID" value="NZ_CADILS010000002.1"/>
</dbReference>
<dbReference type="SMR" id="A1ABH7"/>
<dbReference type="KEGG" id="ecv:APECO1_715"/>
<dbReference type="HOGENOM" id="CLU_046659_1_0_6"/>
<dbReference type="Proteomes" id="UP000008216">
    <property type="component" value="Chromosome"/>
</dbReference>
<dbReference type="GO" id="GO:0005886">
    <property type="term" value="C:plasma membrane"/>
    <property type="evidence" value="ECO:0007669"/>
    <property type="project" value="UniProtKB-SubCell"/>
</dbReference>
<dbReference type="GO" id="GO:0022900">
    <property type="term" value="P:electron transport chain"/>
    <property type="evidence" value="ECO:0007669"/>
    <property type="project" value="UniProtKB-UniRule"/>
</dbReference>
<dbReference type="HAMAP" id="MF_00478">
    <property type="entry name" value="RsxE_RnfE"/>
    <property type="match status" value="1"/>
</dbReference>
<dbReference type="InterPro" id="IPR003667">
    <property type="entry name" value="NqrDE/RnfAE"/>
</dbReference>
<dbReference type="InterPro" id="IPR010968">
    <property type="entry name" value="RnfE"/>
</dbReference>
<dbReference type="NCBIfam" id="NF009070">
    <property type="entry name" value="PRK12405.1"/>
    <property type="match status" value="1"/>
</dbReference>
<dbReference type="NCBIfam" id="TIGR01948">
    <property type="entry name" value="rnfE"/>
    <property type="match status" value="1"/>
</dbReference>
<dbReference type="PANTHER" id="PTHR30586">
    <property type="entry name" value="ELECTRON TRANSPORT COMPLEX PROTEIN RNFE"/>
    <property type="match status" value="1"/>
</dbReference>
<dbReference type="PANTHER" id="PTHR30586:SF0">
    <property type="entry name" value="ION-TRANSLOCATING OXIDOREDUCTASE COMPLEX SUBUNIT E"/>
    <property type="match status" value="1"/>
</dbReference>
<dbReference type="Pfam" id="PF02508">
    <property type="entry name" value="Rnf-Nqr"/>
    <property type="match status" value="1"/>
</dbReference>
<dbReference type="PIRSF" id="PIRSF006102">
    <property type="entry name" value="NQR_DE"/>
    <property type="match status" value="1"/>
</dbReference>
<protein>
    <recommendedName>
        <fullName evidence="1">Ion-translocating oxidoreductase complex subunit E</fullName>
        <ecNumber evidence="1">7.-.-.-</ecNumber>
    </recommendedName>
    <alternativeName>
        <fullName evidence="1">Rsx electron transport complex subunit E</fullName>
    </alternativeName>
</protein>
<accession>A1ABH7</accession>
<keyword id="KW-0997">Cell inner membrane</keyword>
<keyword id="KW-1003">Cell membrane</keyword>
<keyword id="KW-0249">Electron transport</keyword>
<keyword id="KW-0472">Membrane</keyword>
<keyword id="KW-1185">Reference proteome</keyword>
<keyword id="KW-1278">Translocase</keyword>
<keyword id="KW-0812">Transmembrane</keyword>
<keyword id="KW-1133">Transmembrane helix</keyword>
<keyword id="KW-0813">Transport</keyword>
<comment type="function">
    <text evidence="1">Part of a membrane-bound complex that couples electron transfer with translocation of ions across the membrane. Required to maintain the reduced state of SoxR.</text>
</comment>
<comment type="subunit">
    <text evidence="1">The complex is composed of six subunits: RsxA, RsxB, RsxC, RsxD, RsxE and RsxG.</text>
</comment>
<comment type="subcellular location">
    <subcellularLocation>
        <location evidence="1">Cell inner membrane</location>
        <topology evidence="1">Multi-pass membrane protein</topology>
    </subcellularLocation>
</comment>
<comment type="similarity">
    <text evidence="1">Belongs to the NqrDE/RnfAE family.</text>
</comment>
<name>RSXE_ECOK1</name>
<sequence length="231" mass="24508">MSEIKDVIVQGLWKNNSALVQLLGLCPLLAVTSTATNALGLGLATTLVLTLTNLTISTLRHWTPAEIRIPIYVMIIASVVSAVQMLINAYAFGLYQSLGIFIPLIVTNCIVVGRAEAFAAKKGPALSALDGFSIGMGATCAMFVLGSLREIIGNGTLFDGADALLGSWAKVLRVEIFRTDSPFLLAMLPPGAFIGLGLMLAGKYLIDEKMKKRRTEAVAERALPNGETGNV</sequence>
<reference key="1">
    <citation type="journal article" date="2007" name="J. Bacteriol.">
        <title>The genome sequence of avian pathogenic Escherichia coli strain O1:K1:H7 shares strong similarities with human extraintestinal pathogenic E. coli genomes.</title>
        <authorList>
            <person name="Johnson T.J."/>
            <person name="Kariyawasam S."/>
            <person name="Wannemuehler Y."/>
            <person name="Mangiamele P."/>
            <person name="Johnson S.J."/>
            <person name="Doetkott C."/>
            <person name="Skyberg J.A."/>
            <person name="Lynne A.M."/>
            <person name="Johnson J.R."/>
            <person name="Nolan L.K."/>
        </authorList>
    </citation>
    <scope>NUCLEOTIDE SEQUENCE [LARGE SCALE GENOMIC DNA]</scope>
</reference>